<evidence type="ECO:0000250" key="1">
    <source>
        <dbReference type="UniProtKB" id="Q70EL1"/>
    </source>
</evidence>
<evidence type="ECO:0000250" key="2">
    <source>
        <dbReference type="UniProtKB" id="Q8BL06"/>
    </source>
</evidence>
<evidence type="ECO:0000255" key="3"/>
<evidence type="ECO:0000255" key="4">
    <source>
        <dbReference type="PROSITE-ProRule" id="PRU01035"/>
    </source>
</evidence>
<evidence type="ECO:0000256" key="5">
    <source>
        <dbReference type="SAM" id="MobiDB-lite"/>
    </source>
</evidence>
<evidence type="ECO:0000305" key="6"/>
<evidence type="ECO:0007744" key="7">
    <source>
    </source>
</evidence>
<sequence length="1588" mass="176155">MSWKRNYFSGGRGSVQGMFAPRSSMSIAPSKGLSNEPGQNSCFLNSALQVLWHLDIFRRSFRQLTSHKCMGDSCIFCALKGIFKQFQCSSEKVLPSDTLRSALAKTFQDEQRFQLGIMDDAAECFENLLMRIHFHIADETKEDICTAPHCISHQKFAMTLFEQCVCTSCGATSDPLPFIQMVHYISTTSLCNQAICMLEKREKPSPGMFGELLQNASTMGDLRDCPSNCGERIRIRRVLMNAPQIITIGLVWDSDHSDLAEDVIHSLGTCLKLGDLFFRVTDDRAKQSELYLVGMICYYGKHYSTFFFQTKIRKWMYFDDAHVKEIGPKWKDVVTKCIKGHYQPLLLLYADPQGTPVSAQDLPPHAQLLSHTKTCYDSEDSGHLTDSECNQKHTTKKGPLVERRRGSGRIRRKADAPQASGYHSEGETLKEKQAPRNASKSSSTSRLKDFKETVSNMIHSRPSLASQTNAASPCVGRAGDQPDKIPARNLPLHSRGWETESTSSEARSSSSSKYRPTWRPKRESLNIDSIFSKDKRKHCGYTQLKTFPEDAAKEFAQDEVSNPVANDIKDGGPSSQHKLWGTARPGSHLLEQHPRLIQRMESGYESSERNSSSPVSLDAAPPECLNVYRDQSTKRAVGFVPSWRHIPKSHSSSILEVDSTAPVTGWTETQPFSDGEITSKSELDELQEEVARRAQEQELRKKREKELEAAKGFNPHPSRYMDLDELQNQGRSDGFERSLQEANSVFEESLHLEQEGDCAAALALCNEAISKLRLTLHDASSSTHSRALVDKKLQISIRKARSLQDRMQQQPPSQQPVQPSASLPSQGGGLPQPTSEQSVPLQVLLSQQTQLEPCKDSELGATSPFFHSPASCPEPHSSLVSPSPAQSVSQHSPPGTSALKLLKSFEVDIVNHSAFHRQDLPKATGRTEMNSQHECLPFDALEDRLQGHREDNSCCSKFPPQEGRDTTQDQLLEGRKTPVDISMGMPWSHSAGGATSERVMHSLNSPSSPSAQPAVPPYGACHPIMSAAASPVLHAADPMQKLNQHLQAQSLQTSLASKVVRGSEEPYRPEFPSTKGLVRSLAEQFQKIRNTSTRDVIGSQDRSLPNGLRKSSSPSDFMLPLSQGPEKEHCRWVNQPPSPDGRERQPCWEEPAGHPSVSIDSGLPNGEASRRRQPRLAEADIYQGKLPQVTDTRPTELGSSVSLGTSLPLDSWVNVTRLCDSQVKHRAPGLGVKSSSHDSRTCVTYPERNPILLHPHWNQDTEQETSELESLYQASLQASSHTGYSDWRSQDVAWQPLSLTGSADGMGRRLHSAPGLDLSKTPTAEMERILYEPSTVPVSQDSSNVRKKTLETGHHCSSSSSLPVIHDPPVFLLDPKLYPPQPQFLSPDVLMPSMAGEPYRSPGTSRSVQQFLAMCDRDETPQGVKYTGRTLNYRSLPHRSRTDASWGPGTETNQHIGARVLTAPACKPQLTYTATLPERHQGLQVPHAQSWGNLFHLPSHPSAVHPGSPPSSSLHVLHRSSWNSGSVLGSRTPGPRRIDVPPDDDGRQSQYPSQYRHRSAGEERVRFALSNTAGTEQSRVRLLQHSRW</sequence>
<feature type="chain" id="PRO_0000249532" description="Ubiquitin carboxyl-terminal hydrolase 54">
    <location>
        <begin position="1"/>
        <end position="1588"/>
    </location>
</feature>
<feature type="domain" description="USP" evidence="4">
    <location>
        <begin position="31"/>
        <end position="352"/>
    </location>
</feature>
<feature type="region of interest" description="Disordered" evidence="5">
    <location>
        <begin position="380"/>
        <end position="447"/>
    </location>
</feature>
<feature type="region of interest" description="Disordered" evidence="5">
    <location>
        <begin position="459"/>
        <end position="519"/>
    </location>
</feature>
<feature type="region of interest" description="Disordered" evidence="5">
    <location>
        <begin position="601"/>
        <end position="620"/>
    </location>
</feature>
<feature type="region of interest" description="Disordered" evidence="5">
    <location>
        <begin position="801"/>
        <end position="839"/>
    </location>
</feature>
<feature type="region of interest" description="Disordered" evidence="5">
    <location>
        <begin position="856"/>
        <end position="895"/>
    </location>
</feature>
<feature type="region of interest" description="Disordered" evidence="5">
    <location>
        <begin position="950"/>
        <end position="969"/>
    </location>
</feature>
<feature type="region of interest" description="Disordered" evidence="5">
    <location>
        <begin position="1093"/>
        <end position="1172"/>
    </location>
</feature>
<feature type="region of interest" description="Disordered" evidence="5">
    <location>
        <begin position="1525"/>
        <end position="1562"/>
    </location>
</feature>
<feature type="coiled-coil region" evidence="3">
    <location>
        <begin position="678"/>
        <end position="712"/>
    </location>
</feature>
<feature type="compositionally biased region" description="Basic and acidic residues" evidence="5">
    <location>
        <begin position="380"/>
        <end position="391"/>
    </location>
</feature>
<feature type="compositionally biased region" description="Basic and acidic residues" evidence="5">
    <location>
        <begin position="424"/>
        <end position="434"/>
    </location>
</feature>
<feature type="compositionally biased region" description="Polar residues" evidence="5">
    <location>
        <begin position="436"/>
        <end position="445"/>
    </location>
</feature>
<feature type="compositionally biased region" description="Polar residues" evidence="5">
    <location>
        <begin position="459"/>
        <end position="471"/>
    </location>
</feature>
<feature type="compositionally biased region" description="Low complexity" evidence="5">
    <location>
        <begin position="499"/>
        <end position="512"/>
    </location>
</feature>
<feature type="compositionally biased region" description="Low complexity" evidence="5">
    <location>
        <begin position="601"/>
        <end position="616"/>
    </location>
</feature>
<feature type="compositionally biased region" description="Low complexity" evidence="5">
    <location>
        <begin position="808"/>
        <end position="825"/>
    </location>
</feature>
<feature type="compositionally biased region" description="Polar residues" evidence="5">
    <location>
        <begin position="878"/>
        <end position="895"/>
    </location>
</feature>
<feature type="compositionally biased region" description="Basic and acidic residues" evidence="5">
    <location>
        <begin position="1536"/>
        <end position="1547"/>
    </location>
</feature>
<feature type="active site" description="Nucleophile" evidence="4">
    <location>
        <position position="42"/>
    </location>
</feature>
<feature type="active site" description="Proton acceptor" evidence="4">
    <location>
        <position position="302"/>
    </location>
</feature>
<feature type="binding site" evidence="1">
    <location>
        <position position="67"/>
    </location>
    <ligand>
        <name>Zn(2+)</name>
        <dbReference type="ChEBI" id="CHEBI:29105"/>
        <label>1</label>
    </ligand>
</feature>
<feature type="binding site" evidence="1">
    <location>
        <position position="69"/>
    </location>
    <ligand>
        <name>Zn(2+)</name>
        <dbReference type="ChEBI" id="CHEBI:29105"/>
        <label>1</label>
    </ligand>
</feature>
<feature type="binding site" evidence="1">
    <location>
        <position position="74"/>
    </location>
    <ligand>
        <name>Zn(2+)</name>
        <dbReference type="ChEBI" id="CHEBI:29105"/>
        <label>1</label>
    </ligand>
</feature>
<feature type="binding site" evidence="1">
    <location>
        <position position="77"/>
    </location>
    <ligand>
        <name>Zn(2+)</name>
        <dbReference type="ChEBI" id="CHEBI:29105"/>
        <label>1</label>
    </ligand>
</feature>
<feature type="binding site" evidence="1">
    <location>
        <position position="133"/>
    </location>
    <ligand>
        <name>Zn(2+)</name>
        <dbReference type="ChEBI" id="CHEBI:29105"/>
        <label>2</label>
    </ligand>
</feature>
<feature type="binding site" evidence="1">
    <location>
        <position position="145"/>
    </location>
    <ligand>
        <name>Zn(2+)</name>
        <dbReference type="ChEBI" id="CHEBI:29105"/>
        <label>2</label>
    </ligand>
</feature>
<feature type="binding site" evidence="1">
    <location>
        <position position="150"/>
    </location>
    <ligand>
        <name>Zn(2+)</name>
        <dbReference type="ChEBI" id="CHEBI:29105"/>
        <label>2</label>
    </ligand>
</feature>
<feature type="binding site" evidence="1">
    <location>
        <position position="153"/>
    </location>
    <ligand>
        <name>Zn(2+)</name>
        <dbReference type="ChEBI" id="CHEBI:29105"/>
        <label>2</label>
    </ligand>
</feature>
<feature type="binding site" evidence="1">
    <location>
        <position position="166"/>
    </location>
    <ligand>
        <name>Zn(2+)</name>
        <dbReference type="ChEBI" id="CHEBI:29105"/>
        <label>3</label>
    </ligand>
</feature>
<feature type="binding site" evidence="1">
    <location>
        <position position="169"/>
    </location>
    <ligand>
        <name>Zn(2+)</name>
        <dbReference type="ChEBI" id="CHEBI:29105"/>
        <label>3</label>
    </ligand>
</feature>
<feature type="binding site" evidence="1">
    <location>
        <position position="225"/>
    </location>
    <ligand>
        <name>Zn(2+)</name>
        <dbReference type="ChEBI" id="CHEBI:29105"/>
        <label>3</label>
    </ligand>
</feature>
<feature type="binding site" evidence="1">
    <location>
        <position position="229"/>
    </location>
    <ligand>
        <name>Zn(2+)</name>
        <dbReference type="ChEBI" id="CHEBI:29105"/>
        <label>3</label>
    </ligand>
</feature>
<feature type="modified residue" description="Omega-N-methylarginine" evidence="2">
    <location>
        <position position="12"/>
    </location>
</feature>
<feature type="modified residue" description="Phosphoserine" evidence="7">
    <location>
        <position position="424"/>
    </location>
</feature>
<feature type="modified residue" description="Phosphoserine" evidence="1">
    <location>
        <position position="574"/>
    </location>
</feature>
<feature type="modified residue" description="Phosphoserine" evidence="1">
    <location>
        <position position="613"/>
    </location>
</feature>
<feature type="modified residue" description="Phosphoserine" evidence="2">
    <location>
        <position position="616"/>
    </location>
</feature>
<feature type="modified residue" description="Phosphoserine" evidence="7">
    <location>
        <position position="1138"/>
    </location>
</feature>
<feature type="splice variant" id="VSP_035681" description="In isoform 2." evidence="6">
    <original>HLTDSECNQKHTTKKGPLVERRRGSGRIRRKADAPQASGYHSEGETLKEKQAPRNASKSSSTSR</original>
    <variation>EQLSSPATPYSPMVGSHTQVSTELGERGSVTVREKGQPVCTQLIPIRLVFLCFQSVLLKSAGLK</variation>
    <location>
        <begin position="383"/>
        <end position="446"/>
    </location>
</feature>
<feature type="splice variant" id="VSP_035682" description="In isoform 2." evidence="6">
    <location>
        <begin position="447"/>
        <end position="1588"/>
    </location>
</feature>
<feature type="sequence conflict" description="In Ref. 2; AAH97982." evidence="6" ref="2">
    <original>S</original>
    <variation>F</variation>
    <location>
        <position position="1502"/>
    </location>
</feature>
<reference key="1">
    <citation type="journal article" date="2004" name="Nature">
        <title>Genome sequence of the Brown Norway rat yields insights into mammalian evolution.</title>
        <authorList>
            <person name="Gibbs R.A."/>
            <person name="Weinstock G.M."/>
            <person name="Metzker M.L."/>
            <person name="Muzny D.M."/>
            <person name="Sodergren E.J."/>
            <person name="Scherer S."/>
            <person name="Scott G."/>
            <person name="Steffen D."/>
            <person name="Worley K.C."/>
            <person name="Burch P.E."/>
            <person name="Okwuonu G."/>
            <person name="Hines S."/>
            <person name="Lewis L."/>
            <person name="Deramo C."/>
            <person name="Delgado O."/>
            <person name="Dugan-Rocha S."/>
            <person name="Miner G."/>
            <person name="Morgan M."/>
            <person name="Hawes A."/>
            <person name="Gill R."/>
            <person name="Holt R.A."/>
            <person name="Adams M.D."/>
            <person name="Amanatides P.G."/>
            <person name="Baden-Tillson H."/>
            <person name="Barnstead M."/>
            <person name="Chin S."/>
            <person name="Evans C.A."/>
            <person name="Ferriera S."/>
            <person name="Fosler C."/>
            <person name="Glodek A."/>
            <person name="Gu Z."/>
            <person name="Jennings D."/>
            <person name="Kraft C.L."/>
            <person name="Nguyen T."/>
            <person name="Pfannkoch C.M."/>
            <person name="Sitter C."/>
            <person name="Sutton G.G."/>
            <person name="Venter J.C."/>
            <person name="Woodage T."/>
            <person name="Smith D."/>
            <person name="Lee H.-M."/>
            <person name="Gustafson E."/>
            <person name="Cahill P."/>
            <person name="Kana A."/>
            <person name="Doucette-Stamm L."/>
            <person name="Weinstock K."/>
            <person name="Fechtel K."/>
            <person name="Weiss R.B."/>
            <person name="Dunn D.M."/>
            <person name="Green E.D."/>
            <person name="Blakesley R.W."/>
            <person name="Bouffard G.G."/>
            <person name="De Jong P.J."/>
            <person name="Osoegawa K."/>
            <person name="Zhu B."/>
            <person name="Marra M."/>
            <person name="Schein J."/>
            <person name="Bosdet I."/>
            <person name="Fjell C."/>
            <person name="Jones S."/>
            <person name="Krzywinski M."/>
            <person name="Mathewson C."/>
            <person name="Siddiqui A."/>
            <person name="Wye N."/>
            <person name="McPherson J."/>
            <person name="Zhao S."/>
            <person name="Fraser C.M."/>
            <person name="Shetty J."/>
            <person name="Shatsman S."/>
            <person name="Geer K."/>
            <person name="Chen Y."/>
            <person name="Abramzon S."/>
            <person name="Nierman W.C."/>
            <person name="Havlak P.H."/>
            <person name="Chen R."/>
            <person name="Durbin K.J."/>
            <person name="Egan A."/>
            <person name="Ren Y."/>
            <person name="Song X.-Z."/>
            <person name="Li B."/>
            <person name="Liu Y."/>
            <person name="Qin X."/>
            <person name="Cawley S."/>
            <person name="Cooney A.J."/>
            <person name="D'Souza L.M."/>
            <person name="Martin K."/>
            <person name="Wu J.Q."/>
            <person name="Gonzalez-Garay M.L."/>
            <person name="Jackson A.R."/>
            <person name="Kalafus K.J."/>
            <person name="McLeod M.P."/>
            <person name="Milosavljevic A."/>
            <person name="Virk D."/>
            <person name="Volkov A."/>
            <person name="Wheeler D.A."/>
            <person name="Zhang Z."/>
            <person name="Bailey J.A."/>
            <person name="Eichler E.E."/>
            <person name="Tuzun E."/>
            <person name="Birney E."/>
            <person name="Mongin E."/>
            <person name="Ureta-Vidal A."/>
            <person name="Woodwark C."/>
            <person name="Zdobnov E."/>
            <person name="Bork P."/>
            <person name="Suyama M."/>
            <person name="Torrents D."/>
            <person name="Alexandersson M."/>
            <person name="Trask B.J."/>
            <person name="Young J.M."/>
            <person name="Huang H."/>
            <person name="Wang H."/>
            <person name="Xing H."/>
            <person name="Daniels S."/>
            <person name="Gietzen D."/>
            <person name="Schmidt J."/>
            <person name="Stevens K."/>
            <person name="Vitt U."/>
            <person name="Wingrove J."/>
            <person name="Camara F."/>
            <person name="Mar Alba M."/>
            <person name="Abril J.F."/>
            <person name="Guigo R."/>
            <person name="Smit A."/>
            <person name="Dubchak I."/>
            <person name="Rubin E.M."/>
            <person name="Couronne O."/>
            <person name="Poliakov A."/>
            <person name="Huebner N."/>
            <person name="Ganten D."/>
            <person name="Goesele C."/>
            <person name="Hummel O."/>
            <person name="Kreitler T."/>
            <person name="Lee Y.-A."/>
            <person name="Monti J."/>
            <person name="Schulz H."/>
            <person name="Zimdahl H."/>
            <person name="Himmelbauer H."/>
            <person name="Lehrach H."/>
            <person name="Jacob H.J."/>
            <person name="Bromberg S."/>
            <person name="Gullings-Handley J."/>
            <person name="Jensen-Seaman M.I."/>
            <person name="Kwitek A.E."/>
            <person name="Lazar J."/>
            <person name="Pasko D."/>
            <person name="Tonellato P.J."/>
            <person name="Twigger S."/>
            <person name="Ponting C.P."/>
            <person name="Duarte J.M."/>
            <person name="Rice S."/>
            <person name="Goodstadt L."/>
            <person name="Beatson S.A."/>
            <person name="Emes R.D."/>
            <person name="Winter E.E."/>
            <person name="Webber C."/>
            <person name="Brandt P."/>
            <person name="Nyakatura G."/>
            <person name="Adetobi M."/>
            <person name="Chiaromonte F."/>
            <person name="Elnitski L."/>
            <person name="Eswara P."/>
            <person name="Hardison R.C."/>
            <person name="Hou M."/>
            <person name="Kolbe D."/>
            <person name="Makova K."/>
            <person name="Miller W."/>
            <person name="Nekrutenko A."/>
            <person name="Riemer C."/>
            <person name="Schwartz S."/>
            <person name="Taylor J."/>
            <person name="Yang S."/>
            <person name="Zhang Y."/>
            <person name="Lindpaintner K."/>
            <person name="Andrews T.D."/>
            <person name="Caccamo M."/>
            <person name="Clamp M."/>
            <person name="Clarke L."/>
            <person name="Curwen V."/>
            <person name="Durbin R.M."/>
            <person name="Eyras E."/>
            <person name="Searle S.M."/>
            <person name="Cooper G.M."/>
            <person name="Batzoglou S."/>
            <person name="Brudno M."/>
            <person name="Sidow A."/>
            <person name="Stone E.A."/>
            <person name="Payseur B.A."/>
            <person name="Bourque G."/>
            <person name="Lopez-Otin C."/>
            <person name="Puente X.S."/>
            <person name="Chakrabarti K."/>
            <person name="Chatterji S."/>
            <person name="Dewey C."/>
            <person name="Pachter L."/>
            <person name="Bray N."/>
            <person name="Yap V.B."/>
            <person name="Caspi A."/>
            <person name="Tesler G."/>
            <person name="Pevzner P.A."/>
            <person name="Haussler D."/>
            <person name="Roskin K.M."/>
            <person name="Baertsch R."/>
            <person name="Clawson H."/>
            <person name="Furey T.S."/>
            <person name="Hinrichs A.S."/>
            <person name="Karolchik D."/>
            <person name="Kent W.J."/>
            <person name="Rosenbloom K.R."/>
            <person name="Trumbower H."/>
            <person name="Weirauch M."/>
            <person name="Cooper D.N."/>
            <person name="Stenson P.D."/>
            <person name="Ma B."/>
            <person name="Brent M."/>
            <person name="Arumugam M."/>
            <person name="Shteynberg D."/>
            <person name="Copley R.R."/>
            <person name="Taylor M.S."/>
            <person name="Riethman H."/>
            <person name="Mudunuri U."/>
            <person name="Peterson J."/>
            <person name="Guyer M."/>
            <person name="Felsenfeld A."/>
            <person name="Old S."/>
            <person name="Mockrin S."/>
            <person name="Collins F.S."/>
        </authorList>
    </citation>
    <scope>NUCLEOTIDE SEQUENCE [LARGE SCALE GENOMIC DNA]</scope>
    <source>
        <strain>Brown Norway</strain>
    </source>
</reference>
<reference key="2">
    <citation type="journal article" date="2004" name="Genome Res.">
        <title>The status, quality, and expansion of the NIH full-length cDNA project: the Mammalian Gene Collection (MGC).</title>
        <authorList>
            <consortium name="The MGC Project Team"/>
        </authorList>
    </citation>
    <scope>NUCLEOTIDE SEQUENCE [LARGE SCALE MRNA] OF 1013-1588 (ISOFORM 1)</scope>
    <source>
        <tissue>Placenta</tissue>
    </source>
</reference>
<reference key="3">
    <citation type="journal article" date="2004" name="Genome Res.">
        <title>A genomic analysis of rat proteases and protease inhibitors.</title>
        <authorList>
            <person name="Puente X.S."/>
            <person name="Lopez-Otin C."/>
        </authorList>
    </citation>
    <scope>IDENTIFICATION (ISOFORM 2)</scope>
</reference>
<reference key="4">
    <citation type="journal article" date="2012" name="Nat. Commun.">
        <title>Quantitative maps of protein phosphorylation sites across 14 different rat organs and tissues.</title>
        <authorList>
            <person name="Lundby A."/>
            <person name="Secher A."/>
            <person name="Lage K."/>
            <person name="Nordsborg N.B."/>
            <person name="Dmytriyev A."/>
            <person name="Lundby C."/>
            <person name="Olsen J.V."/>
        </authorList>
    </citation>
    <scope>PHOSPHORYLATION [LARGE SCALE ANALYSIS] AT SER-424 AND SER-1138</scope>
    <scope>IDENTIFICATION BY MASS SPECTROMETRY [LARGE SCALE ANALYSIS]</scope>
</reference>
<comment type="function">
    <text evidence="1">Deubiquitinase that specifically mediates 'Lys-63'-linked deubiquitination of substrates with a polyubiquitin chain composed of at least 3 ubiquitins. Specifically recognizes ubiquitin chain in position S2 and catalyzes cleavage of polyubiquitin within 'Lys-63'-linked chains. Not able to deubiquitinate substrates with shorter ubiquitin chains. Mediates deubiquitination of PLK4, maintaining PLK4 stability by reducing its ubiquitination-mediated degradation.</text>
</comment>
<comment type="catalytic activity">
    <reaction evidence="1">
        <text>Thiol-dependent hydrolysis of ester, thioester, amide, peptide and isopeptide bonds formed by the C-terminal Gly of ubiquitin (a 76-residue protein attached to proteins as an intracellular targeting signal).</text>
        <dbReference type="EC" id="3.4.19.12"/>
    </reaction>
</comment>
<comment type="alternative products">
    <event type="alternative splicing"/>
    <isoform>
        <id>Q6IE24-1</id>
        <name>1</name>
        <sequence type="displayed"/>
    </isoform>
    <isoform>
        <id>Q6IE24-2</id>
        <name>2</name>
        <sequence type="described" ref="VSP_035681 VSP_035682"/>
    </isoform>
</comment>
<comment type="similarity">
    <text evidence="4">Belongs to the peptidase C19 family.</text>
</comment>
<dbReference type="EC" id="3.4.19.12" evidence="1"/>
<dbReference type="EMBL" id="AABR03094963">
    <property type="status" value="NOT_ANNOTATED_CDS"/>
    <property type="molecule type" value="Genomic_DNA"/>
</dbReference>
<dbReference type="EMBL" id="BC097982">
    <property type="protein sequence ID" value="AAH97982.1"/>
    <property type="molecule type" value="mRNA"/>
</dbReference>
<dbReference type="EMBL" id="BN000369">
    <property type="protein sequence ID" value="CAE51895.1"/>
    <property type="molecule type" value="mRNA"/>
</dbReference>
<dbReference type="RefSeq" id="NP_001008863.2">
    <molecule id="Q6IE24-1"/>
    <property type="nucleotide sequence ID" value="NM_001008863.3"/>
</dbReference>
<dbReference type="RefSeq" id="XP_038949501.1">
    <molecule id="Q6IE24-1"/>
    <property type="nucleotide sequence ID" value="XM_039093573.2"/>
</dbReference>
<dbReference type="RefSeq" id="XP_063130604.1">
    <molecule id="Q6IE24-1"/>
    <property type="nucleotide sequence ID" value="XM_063274534.1"/>
</dbReference>
<dbReference type="RefSeq" id="XP_063130605.1">
    <molecule id="Q6IE24-1"/>
    <property type="nucleotide sequence ID" value="XM_063274535.1"/>
</dbReference>
<dbReference type="RefSeq" id="XP_063130606.1">
    <molecule id="Q6IE24-1"/>
    <property type="nucleotide sequence ID" value="XM_063274536.1"/>
</dbReference>
<dbReference type="RefSeq" id="XP_063130607.1">
    <molecule id="Q6IE24-1"/>
    <property type="nucleotide sequence ID" value="XM_063274537.1"/>
</dbReference>
<dbReference type="SMR" id="Q6IE24"/>
<dbReference type="FunCoup" id="Q6IE24">
    <property type="interactions" value="2577"/>
</dbReference>
<dbReference type="STRING" id="10116.ENSRNOP00000068778"/>
<dbReference type="MEROPS" id="C19.080"/>
<dbReference type="iPTMnet" id="Q6IE24"/>
<dbReference type="PhosphoSitePlus" id="Q6IE24"/>
<dbReference type="PaxDb" id="10116-ENSRNOP00000038767"/>
<dbReference type="Ensembl" id="ENSRNOT00000029615.5">
    <molecule id="Q6IE24-1"/>
    <property type="protein sequence ID" value="ENSRNOP00000038767.4"/>
    <property type="gene ID" value="ENSRNOG00000027012.7"/>
</dbReference>
<dbReference type="Ensembl" id="ENSRNOT00000099921.1">
    <molecule id="Q6IE24-2"/>
    <property type="protein sequence ID" value="ENSRNOP00000097777.1"/>
    <property type="gene ID" value="ENSRNOG00000027012.7"/>
</dbReference>
<dbReference type="GeneID" id="408223"/>
<dbReference type="KEGG" id="rno:408223"/>
<dbReference type="UCSC" id="RGD:1303206">
    <molecule id="Q6IE24-1"/>
    <property type="organism name" value="rat"/>
</dbReference>
<dbReference type="AGR" id="RGD:1303206"/>
<dbReference type="CTD" id="159195"/>
<dbReference type="RGD" id="1303206">
    <property type="gene designation" value="Usp54"/>
</dbReference>
<dbReference type="eggNOG" id="KOG1887">
    <property type="taxonomic scope" value="Eukaryota"/>
</dbReference>
<dbReference type="GeneTree" id="ENSGT00940000155571"/>
<dbReference type="InParanoid" id="Q6IE24"/>
<dbReference type="OrthoDB" id="205782at2759"/>
<dbReference type="PhylomeDB" id="Q6IE24"/>
<dbReference type="TreeFam" id="TF336130"/>
<dbReference type="PRO" id="PR:Q6IE24"/>
<dbReference type="Proteomes" id="UP000002494">
    <property type="component" value="Chromosome 15"/>
</dbReference>
<dbReference type="Bgee" id="ENSRNOG00000027012">
    <property type="expression patterns" value="Expressed in cerebellum and 20 other cell types or tissues"/>
</dbReference>
<dbReference type="ExpressionAtlas" id="Q6IE24">
    <property type="expression patterns" value="baseline and differential"/>
</dbReference>
<dbReference type="GO" id="GO:0004843">
    <property type="term" value="F:cysteine-type deubiquitinase activity"/>
    <property type="evidence" value="ECO:0000250"/>
    <property type="project" value="UniProtKB"/>
</dbReference>
<dbReference type="GO" id="GO:0061578">
    <property type="term" value="F:K63-linked deubiquitinase activity"/>
    <property type="evidence" value="ECO:0000266"/>
    <property type="project" value="RGD"/>
</dbReference>
<dbReference type="GO" id="GO:0016579">
    <property type="term" value="P:protein deubiquitination"/>
    <property type="evidence" value="ECO:0007669"/>
    <property type="project" value="InterPro"/>
</dbReference>
<dbReference type="GO" id="GO:0006508">
    <property type="term" value="P:proteolysis"/>
    <property type="evidence" value="ECO:0007669"/>
    <property type="project" value="UniProtKB-KW"/>
</dbReference>
<dbReference type="CDD" id="cd02257">
    <property type="entry name" value="Peptidase_C19"/>
    <property type="match status" value="1"/>
</dbReference>
<dbReference type="FunFam" id="3.90.70.10:FF:000041">
    <property type="entry name" value="Inactive ubiquitin carboxyl-terminal hydrolase 53"/>
    <property type="match status" value="1"/>
</dbReference>
<dbReference type="Gene3D" id="3.90.70.10">
    <property type="entry name" value="Cysteine proteinases"/>
    <property type="match status" value="1"/>
</dbReference>
<dbReference type="InterPro" id="IPR052398">
    <property type="entry name" value="Inactive_ubiquitin_hydrolase"/>
</dbReference>
<dbReference type="InterPro" id="IPR038765">
    <property type="entry name" value="Papain-like_cys_pep_sf"/>
</dbReference>
<dbReference type="InterPro" id="IPR001394">
    <property type="entry name" value="Peptidase_C19_UCH"/>
</dbReference>
<dbReference type="InterPro" id="IPR028889">
    <property type="entry name" value="USP_dom"/>
</dbReference>
<dbReference type="PANTHER" id="PTHR22975:SF5">
    <property type="entry name" value="INACTIVE UBIQUITIN CARBOXYL-TERMINAL HYDROLASE 54"/>
    <property type="match status" value="1"/>
</dbReference>
<dbReference type="PANTHER" id="PTHR22975">
    <property type="entry name" value="UBIQUITIN SPECIFIC PROTEINASE"/>
    <property type="match status" value="1"/>
</dbReference>
<dbReference type="Pfam" id="PF00443">
    <property type="entry name" value="UCH"/>
    <property type="match status" value="1"/>
</dbReference>
<dbReference type="SUPFAM" id="SSF54001">
    <property type="entry name" value="Cysteine proteinases"/>
    <property type="match status" value="1"/>
</dbReference>
<dbReference type="PROSITE" id="PS50235">
    <property type="entry name" value="USP_3"/>
    <property type="match status" value="1"/>
</dbReference>
<protein>
    <recommendedName>
        <fullName>Ubiquitin carboxyl-terminal hydrolase 54</fullName>
        <ecNumber evidence="1">3.4.19.12</ecNumber>
    </recommendedName>
    <alternativeName>
        <fullName>Ubiquitin-specific peptidase 54</fullName>
    </alternativeName>
</protein>
<name>UBP54_RAT</name>
<organism>
    <name type="scientific">Rattus norvegicus</name>
    <name type="common">Rat</name>
    <dbReference type="NCBI Taxonomy" id="10116"/>
    <lineage>
        <taxon>Eukaryota</taxon>
        <taxon>Metazoa</taxon>
        <taxon>Chordata</taxon>
        <taxon>Craniata</taxon>
        <taxon>Vertebrata</taxon>
        <taxon>Euteleostomi</taxon>
        <taxon>Mammalia</taxon>
        <taxon>Eutheria</taxon>
        <taxon>Euarchontoglires</taxon>
        <taxon>Glires</taxon>
        <taxon>Rodentia</taxon>
        <taxon>Myomorpha</taxon>
        <taxon>Muroidea</taxon>
        <taxon>Muridae</taxon>
        <taxon>Murinae</taxon>
        <taxon>Rattus</taxon>
    </lineage>
</organism>
<proteinExistence type="evidence at protein level"/>
<gene>
    <name type="primary">Usp54</name>
</gene>
<accession>Q6IE24</accession>
<accession>Q4QQU8</accession>
<keyword id="KW-0025">Alternative splicing</keyword>
<keyword id="KW-0175">Coiled coil</keyword>
<keyword id="KW-0378">Hydrolase</keyword>
<keyword id="KW-0479">Metal-binding</keyword>
<keyword id="KW-0488">Methylation</keyword>
<keyword id="KW-0597">Phosphoprotein</keyword>
<keyword id="KW-0645">Protease</keyword>
<keyword id="KW-1185">Reference proteome</keyword>
<keyword id="KW-0788">Thiol protease</keyword>
<keyword id="KW-0833">Ubl conjugation pathway</keyword>
<keyword id="KW-0862">Zinc</keyword>